<keyword id="KW-0106">Calcium</keyword>
<keyword id="KW-0164">Citrullination</keyword>
<keyword id="KW-0417">Keratinization</keyword>
<keyword id="KW-0479">Metal-binding</keyword>
<keyword id="KW-1185">Reference proteome</keyword>
<keyword id="KW-0677">Repeat</keyword>
<gene>
    <name type="primary">TCHH</name>
    <name type="synonym">THH</name>
</gene>
<organism>
    <name type="scientific">Oryctolagus cuniculus</name>
    <name type="common">Rabbit</name>
    <dbReference type="NCBI Taxonomy" id="9986"/>
    <lineage>
        <taxon>Eukaryota</taxon>
        <taxon>Metazoa</taxon>
        <taxon>Chordata</taxon>
        <taxon>Craniata</taxon>
        <taxon>Vertebrata</taxon>
        <taxon>Euteleostomi</taxon>
        <taxon>Mammalia</taxon>
        <taxon>Eutheria</taxon>
        <taxon>Euarchontoglires</taxon>
        <taxon>Glires</taxon>
        <taxon>Lagomorpha</taxon>
        <taxon>Leporidae</taxon>
        <taxon>Oryctolagus</taxon>
    </lineage>
</organism>
<reference key="1">
    <citation type="submission" date="1992-12" db="EMBL/GenBank/DDBJ databases">
        <title>Examination of the gene encoding rabbit trichohyalin.</title>
        <authorList>
            <person name="Fietz M.J."/>
            <person name="Rogers G.E."/>
        </authorList>
    </citation>
    <scope>NUCLEOTIDE SEQUENCE [GENOMIC DNA]</scope>
</reference>
<dbReference type="EMBL" id="Z19092">
    <property type="protein sequence ID" value="CAA79519.1"/>
    <property type="molecule type" value="Genomic_DNA"/>
</dbReference>
<dbReference type="PIR" id="S28589">
    <property type="entry name" value="S28589"/>
</dbReference>
<dbReference type="RefSeq" id="XP_017201365.3">
    <property type="nucleotide sequence ID" value="XM_017345876.3"/>
</dbReference>
<dbReference type="SMR" id="P37709"/>
<dbReference type="STRING" id="9986.ENSOCUP00000004511"/>
<dbReference type="PaxDb" id="9986-ENSOCUP00000004511"/>
<dbReference type="GeneID" id="100337740"/>
<dbReference type="KEGG" id="ocu:100337740"/>
<dbReference type="eggNOG" id="ENOG502QQH0">
    <property type="taxonomic scope" value="Eukaryota"/>
</dbReference>
<dbReference type="InParanoid" id="P37709"/>
<dbReference type="Proteomes" id="UP000001811">
    <property type="component" value="Unplaced"/>
</dbReference>
<dbReference type="GO" id="GO:0005509">
    <property type="term" value="F:calcium ion binding"/>
    <property type="evidence" value="ECO:0007669"/>
    <property type="project" value="InterPro"/>
</dbReference>
<dbReference type="GO" id="GO:0046914">
    <property type="term" value="F:transition metal ion binding"/>
    <property type="evidence" value="ECO:0007669"/>
    <property type="project" value="InterPro"/>
</dbReference>
<dbReference type="GO" id="GO:0045109">
    <property type="term" value="P:intermediate filament organization"/>
    <property type="evidence" value="ECO:0007669"/>
    <property type="project" value="InterPro"/>
</dbReference>
<dbReference type="GO" id="GO:0031424">
    <property type="term" value="P:keratinization"/>
    <property type="evidence" value="ECO:0007669"/>
    <property type="project" value="UniProtKB-KW"/>
</dbReference>
<dbReference type="CDD" id="cd00213">
    <property type="entry name" value="S-100"/>
    <property type="match status" value="1"/>
</dbReference>
<dbReference type="Gene3D" id="1.10.238.10">
    <property type="entry name" value="EF-hand"/>
    <property type="match status" value="1"/>
</dbReference>
<dbReference type="InterPro" id="IPR011992">
    <property type="entry name" value="EF-hand-dom_pair"/>
</dbReference>
<dbReference type="InterPro" id="IPR018247">
    <property type="entry name" value="EF_Hand_1_Ca_BS"/>
</dbReference>
<dbReference type="InterPro" id="IPR002048">
    <property type="entry name" value="EF_hand_dom"/>
</dbReference>
<dbReference type="InterPro" id="IPR034325">
    <property type="entry name" value="S-100_dom"/>
</dbReference>
<dbReference type="InterPro" id="IPR001751">
    <property type="entry name" value="S100/CaBP7/8-like_CS"/>
</dbReference>
<dbReference type="InterPro" id="IPR013787">
    <property type="entry name" value="S100_Ca-bd_sub"/>
</dbReference>
<dbReference type="InterPro" id="IPR033200">
    <property type="entry name" value="TCHH"/>
</dbReference>
<dbReference type="PANTHER" id="PTHR34855">
    <property type="entry name" value="TRICHOHYALIN"/>
    <property type="match status" value="1"/>
</dbReference>
<dbReference type="PANTHER" id="PTHR34855:SF1">
    <property type="entry name" value="TRICHOHYALIN"/>
    <property type="match status" value="1"/>
</dbReference>
<dbReference type="Pfam" id="PF01023">
    <property type="entry name" value="S_100"/>
    <property type="match status" value="1"/>
</dbReference>
<dbReference type="SMART" id="SM01394">
    <property type="entry name" value="S_100"/>
    <property type="match status" value="1"/>
</dbReference>
<dbReference type="SUPFAM" id="SSF47473">
    <property type="entry name" value="EF-hand"/>
    <property type="match status" value="1"/>
</dbReference>
<dbReference type="PROSITE" id="PS00018">
    <property type="entry name" value="EF_HAND_1"/>
    <property type="match status" value="1"/>
</dbReference>
<dbReference type="PROSITE" id="PS50222">
    <property type="entry name" value="EF_HAND_2"/>
    <property type="match status" value="1"/>
</dbReference>
<dbReference type="PROSITE" id="PS00303">
    <property type="entry name" value="S100_CABP"/>
    <property type="match status" value="1"/>
</dbReference>
<accession>P37709</accession>
<evidence type="ECO:0000255" key="1">
    <source>
        <dbReference type="PROSITE-ProRule" id="PRU00448"/>
    </source>
</evidence>
<evidence type="ECO:0000256" key="2">
    <source>
        <dbReference type="SAM" id="MobiDB-lite"/>
    </source>
</evidence>
<evidence type="ECO:0000305" key="3"/>
<protein>
    <recommendedName>
        <fullName>Trichohyalin</fullName>
    </recommendedName>
</protein>
<sequence>MSPLLKSIIDIIEIFNQYASHDCDGAVLKKKDLKILLDREFGAVLQRPHDPETVDVMLELLDRDSDGLVGFDEFCLLIFKLAQAAYYALGQASGLDEEKRSHGEGKGRLLQNRRQEDQRRFELRDRQFEDEPERRRWQKQEQERELAEEEEQRKKRERFEQHYSRQYRDKEQRLQRQELEERRAEEEQLRRRKGRDAEEFIEEEQLRRREQQELKRELREEEQQRRERREQHERALQEEEEQLLRQRRWREEPREQQQLRRELEEIREREQRLEQEERREQQLRREQRLEQEERREQQLRRELEEIREREQRLEQEERREQRLEQEERREQQLKRELEEIREREQRLEQEERREQLLAEEVREQARERGESLTRRWQRQLESEAGARQSKVYSRPRRQEEQSLRQDQERRQRQERERELEEQARRQQQWQAEEESERRRQRLSARPSLRERQLRAEERQEQEQRFREEEEQRRERRQELQFLEEEEQLQRRERAQQLQEEDSFQEDRERRRRQQEQRPGQTWRWQLQEEAQRRRHTLYAKPGQQEQLREEEELQREKRRQEREREYREEEKLQREEDEKRRRQERERQYRELEELRQEEQLRDRKLREEEQLLQEREEERLRRQERERKLREEEQLLRQEEQELRQERERKLREEEQLLRREEQELRQERERKLREEEQLLQEREEERLRRQERARKLREEEQLLRQEEQELRQERERKLREEEQLLRREEQLLRQERDRKLREEEQLLQESEEERLRRQEREQQLRRERDRKFREEEQLLQEREEERLRRQERERKLREEEQLLQEREEERLRRQERERKLREEEQLLQEREEERLRRQERERKLREEEQLLRQEEQELRQERARKLREEEQLLRQEEQELRQERDRKLREEEQLLRQEEQELRQERDRKLREEEQLLQESEEERLRRQERERKLREEEQLLRREEQELRRERARKLREEEQLLQEREEERLRRQERARKLREEEQLLRREEQELRQERDRKFREEEQLLQEREEERLRRQERDRKFREEERQLRRQELEEQFRQERDRKFRLEEQIRQEKEEKQLRRQERDRKFREEEQQRRRQEREQQLRRERDRKFREEEQLLQEREEERLRRQERARKLREEEQLLRREEQLLRQERDRKFREEEQLLQESEEERLRRQERERKLREEEQLLQEREEERLRRQERARKLREEEQLLRQEEQELRQERARKLREEEQLLRQEEQELRQERDRKFREEEQLLRREEQELRRERDRKFREEEQLLQEREEERLRRQERARKLREEEEQLLFEEQEEQRLRQERDRRYRAEEQFAREEKSRRLERELRQEEEQRRRRERERKFREEQLRRQQEEEQRRRQLRERQFREDQSRRQVLEPGTRQFARVPVRSSPLYEYIQEQRSQYRP</sequence>
<feature type="chain" id="PRO_0000144043" description="Trichohyalin">
    <location>
        <begin position="1"/>
        <end position="1407"/>
    </location>
</feature>
<feature type="domain" description="EF-hand 1" evidence="3">
    <location>
        <begin position="23"/>
        <end position="48"/>
    </location>
</feature>
<feature type="domain" description="EF-hand 2" evidence="1">
    <location>
        <begin position="49"/>
        <end position="84"/>
    </location>
</feature>
<feature type="region of interest" description="S-100-like">
    <location>
        <begin position="1"/>
        <end position="91"/>
    </location>
</feature>
<feature type="region of interest" description="Disordered" evidence="2">
    <location>
        <begin position="148"/>
        <end position="172"/>
    </location>
</feature>
<feature type="region of interest" description="Disordered" evidence="2">
    <location>
        <begin position="218"/>
        <end position="237"/>
    </location>
</feature>
<feature type="region of interest" description="Disordered" evidence="2">
    <location>
        <begin position="362"/>
        <end position="471"/>
    </location>
</feature>
<feature type="region of interest" description="Disordered" evidence="2">
    <location>
        <begin position="486"/>
        <end position="587"/>
    </location>
</feature>
<feature type="region of interest" description="Disordered" evidence="2">
    <location>
        <begin position="1014"/>
        <end position="1033"/>
    </location>
</feature>
<feature type="region of interest" description="Disordered" evidence="2">
    <location>
        <begin position="1062"/>
        <end position="1082"/>
    </location>
</feature>
<feature type="region of interest" description="Disordered" evidence="2">
    <location>
        <begin position="1313"/>
        <end position="1407"/>
    </location>
</feature>
<feature type="compositionally biased region" description="Basic and acidic residues" evidence="2">
    <location>
        <begin position="362"/>
        <end position="381"/>
    </location>
</feature>
<feature type="compositionally biased region" description="Basic and acidic residues" evidence="2">
    <location>
        <begin position="396"/>
        <end position="424"/>
    </location>
</feature>
<feature type="compositionally biased region" description="Basic and acidic residues" evidence="2">
    <location>
        <begin position="447"/>
        <end position="471"/>
    </location>
</feature>
<feature type="compositionally biased region" description="Basic and acidic residues" evidence="2">
    <location>
        <begin position="554"/>
        <end position="587"/>
    </location>
</feature>
<feature type="compositionally biased region" description="Basic and acidic residues" evidence="2">
    <location>
        <begin position="1313"/>
        <end position="1376"/>
    </location>
</feature>
<feature type="binding site" evidence="3">
    <location>
        <position position="32"/>
    </location>
    <ligand>
        <name>Ca(2+)</name>
        <dbReference type="ChEBI" id="CHEBI:29108"/>
        <label>1</label>
        <note>low affinity</note>
    </ligand>
</feature>
<feature type="binding site" evidence="1">
    <location>
        <position position="62"/>
    </location>
    <ligand>
        <name>Ca(2+)</name>
        <dbReference type="ChEBI" id="CHEBI:29108"/>
        <label>2</label>
        <note>high affinity</note>
    </ligand>
</feature>
<feature type="binding site" evidence="1">
    <location>
        <position position="64"/>
    </location>
    <ligand>
        <name>Ca(2+)</name>
        <dbReference type="ChEBI" id="CHEBI:29108"/>
        <label>2</label>
        <note>high affinity</note>
    </ligand>
</feature>
<feature type="binding site" evidence="1">
    <location>
        <position position="66"/>
    </location>
    <ligand>
        <name>Ca(2+)</name>
        <dbReference type="ChEBI" id="CHEBI:29108"/>
        <label>2</label>
        <note>high affinity</note>
    </ligand>
</feature>
<feature type="binding site" evidence="1">
    <location>
        <position position="73"/>
    </location>
    <ligand>
        <name>Ca(2+)</name>
        <dbReference type="ChEBI" id="CHEBI:29108"/>
        <label>2</label>
        <note>high affinity</note>
    </ligand>
</feature>
<name>TRHY_RABIT</name>
<comment type="function">
    <text>Intermediate filament-associated protein that associates in regular arrays with keratin intermediate filaments (KIF) of the inner root sheath cells of the hair follicle and the granular layer of the epidermis. It later becomes cross-linked to KIF by isodipeptide bonds. It may serve as scaffold protein, together with involucrin, in the organization of the cell envelope or even anchor the cell envelope to the KIF network. It may be involved in its own calcium-dependent postsynthetic processing during terminal differentiation.</text>
</comment>
<comment type="subunit">
    <text evidence="3">Homodimer.</text>
</comment>
<comment type="tissue specificity">
    <text>Found in the hard keratinizing tissues such as the inner root sheath (IRS) of hair follicles and medulla, and in the filiform papillae of dorsal tongue epithelium.</text>
</comment>
<comment type="developmental stage">
    <text>Expressed during late differentiation of the epidermis.</text>
</comment>
<comment type="domain">
    <text>Consists of nine domains. Domain 1 contains two EF-hand calcium-binding domains. Domains 2-4, 6, and 8 are almost entirely alpha-helical, configured as a series of peptide repeats of varying regularity, and are thought to form a single-stranded alpha-helical rod stabilized by ionic interactions. Domain 6 is the most regular and may bind KIF directly by ionic interactions. Domains 5 and 7 are less well organized and may induce folds in the molecule. Domain 9 contains the C-terminus, conserved among different species.</text>
</comment>
<comment type="PTM">
    <text>Substrate of transglutaminase. Some 200 arginines are probably converted to citrullines by peptidylarginine deimidase.</text>
</comment>
<comment type="similarity">
    <text evidence="3">Belongs to the S100-fused protein family.</text>
</comment>
<proteinExistence type="evidence at transcript level"/>